<sequence length="424" mass="44375">MSVEAQSRSGAVDTQEPADLREQVHSAARRARVAARTLATLSAEAKNRALHAAADSVLANVDAVLAANAADVDAARQGGTPEAMIDRLALNPQRVDGIAAGLRQVAALPDPVGEVLRGKTLPNGLQLRQQRVPLGVVGMVYEGRPNVTVDAFGLTLKSGNAALLRGSSSAARSNQALVDALRSALAEEGLPLDAVQLLPSQDRASVTHLIQARGLVDVVIPRGGAGLIDAVVRDAQVPTIETGVGNCHVYVHSSADIDMAEKILLNAKTRRPSVCNAAETLLVDRALTDTALPRLVKALQDAGVTVHADPTEDELRAEFLSMDIALAVVDGLDAAIDHINTYGTGHTEAIVTTDLAAAQRFTERVDAAAVMVNASTSFTDGEQFGFGAEIGISTQKLHARGPMGLPELTSTKWIVWGDGQIRPA</sequence>
<protein>
    <recommendedName>
        <fullName evidence="1">Gamma-glutamyl phosphate reductase</fullName>
        <shortName evidence="1">GPR</shortName>
        <ecNumber evidence="1">1.2.1.41</ecNumber>
    </recommendedName>
    <alternativeName>
        <fullName evidence="1">Glutamate-5-semialdehyde dehydrogenase</fullName>
    </alternativeName>
    <alternativeName>
        <fullName evidence="1">Glutamyl-gamma-semialdehyde dehydrogenase</fullName>
        <shortName evidence="1">GSA dehydrogenase</shortName>
    </alternativeName>
</protein>
<feature type="chain" id="PRO_0000340896" description="Gamma-glutamyl phosphate reductase">
    <location>
        <begin position="1"/>
        <end position="424"/>
    </location>
</feature>
<feature type="region of interest" description="Disordered" evidence="2">
    <location>
        <begin position="1"/>
        <end position="27"/>
    </location>
</feature>
<gene>
    <name evidence="1" type="primary">proA</name>
    <name type="ordered locus">MSMEG_4584</name>
    <name type="ordered locus">MSMEI_4472</name>
</gene>
<reference key="1">
    <citation type="submission" date="2006-10" db="EMBL/GenBank/DDBJ databases">
        <authorList>
            <person name="Fleischmann R.D."/>
            <person name="Dodson R.J."/>
            <person name="Haft D.H."/>
            <person name="Merkel J.S."/>
            <person name="Nelson W.C."/>
            <person name="Fraser C.M."/>
        </authorList>
    </citation>
    <scope>NUCLEOTIDE SEQUENCE [LARGE SCALE GENOMIC DNA]</scope>
    <source>
        <strain>ATCC 700084 / mc(2)155</strain>
    </source>
</reference>
<reference key="2">
    <citation type="journal article" date="2007" name="Genome Biol.">
        <title>Interrupted coding sequences in Mycobacterium smegmatis: authentic mutations or sequencing errors?</title>
        <authorList>
            <person name="Deshayes C."/>
            <person name="Perrodou E."/>
            <person name="Gallien S."/>
            <person name="Euphrasie D."/>
            <person name="Schaeffer C."/>
            <person name="Van-Dorsselaer A."/>
            <person name="Poch O."/>
            <person name="Lecompte O."/>
            <person name="Reyrat J.-M."/>
        </authorList>
    </citation>
    <scope>NUCLEOTIDE SEQUENCE [LARGE SCALE GENOMIC DNA]</scope>
    <source>
        <strain>ATCC 700084 / mc(2)155</strain>
    </source>
</reference>
<reference key="3">
    <citation type="journal article" date="2009" name="Genome Res.">
        <title>Ortho-proteogenomics: multiple proteomes investigation through orthology and a new MS-based protocol.</title>
        <authorList>
            <person name="Gallien S."/>
            <person name="Perrodou E."/>
            <person name="Carapito C."/>
            <person name="Deshayes C."/>
            <person name="Reyrat J.-M."/>
            <person name="Van Dorsselaer A."/>
            <person name="Poch O."/>
            <person name="Schaeffer C."/>
            <person name="Lecompte O."/>
        </authorList>
    </citation>
    <scope>NUCLEOTIDE SEQUENCE [LARGE SCALE GENOMIC DNA]</scope>
    <source>
        <strain>ATCC 700084 / mc(2)155</strain>
    </source>
</reference>
<accession>A0R115</accession>
<accession>I7GCI9</accession>
<name>PROA_MYCS2</name>
<proteinExistence type="inferred from homology"/>
<evidence type="ECO:0000255" key="1">
    <source>
        <dbReference type="HAMAP-Rule" id="MF_00412"/>
    </source>
</evidence>
<evidence type="ECO:0000256" key="2">
    <source>
        <dbReference type="SAM" id="MobiDB-lite"/>
    </source>
</evidence>
<comment type="function">
    <text evidence="1">Catalyzes the NADPH-dependent reduction of L-glutamate 5-phosphate into L-glutamate 5-semialdehyde and phosphate. The product spontaneously undergoes cyclization to form 1-pyrroline-5-carboxylate.</text>
</comment>
<comment type="catalytic activity">
    <reaction evidence="1">
        <text>L-glutamate 5-semialdehyde + phosphate + NADP(+) = L-glutamyl 5-phosphate + NADPH + H(+)</text>
        <dbReference type="Rhea" id="RHEA:19541"/>
        <dbReference type="ChEBI" id="CHEBI:15378"/>
        <dbReference type="ChEBI" id="CHEBI:43474"/>
        <dbReference type="ChEBI" id="CHEBI:57783"/>
        <dbReference type="ChEBI" id="CHEBI:58066"/>
        <dbReference type="ChEBI" id="CHEBI:58274"/>
        <dbReference type="ChEBI" id="CHEBI:58349"/>
        <dbReference type="EC" id="1.2.1.41"/>
    </reaction>
</comment>
<comment type="pathway">
    <text evidence="1">Amino-acid biosynthesis; L-proline biosynthesis; L-glutamate 5-semialdehyde from L-glutamate: step 2/2.</text>
</comment>
<comment type="subcellular location">
    <subcellularLocation>
        <location evidence="1">Cytoplasm</location>
    </subcellularLocation>
</comment>
<comment type="similarity">
    <text evidence="1">Belongs to the gamma-glutamyl phosphate reductase family.</text>
</comment>
<organism>
    <name type="scientific">Mycolicibacterium smegmatis (strain ATCC 700084 / mc(2)155)</name>
    <name type="common">Mycobacterium smegmatis</name>
    <dbReference type="NCBI Taxonomy" id="246196"/>
    <lineage>
        <taxon>Bacteria</taxon>
        <taxon>Bacillati</taxon>
        <taxon>Actinomycetota</taxon>
        <taxon>Actinomycetes</taxon>
        <taxon>Mycobacteriales</taxon>
        <taxon>Mycobacteriaceae</taxon>
        <taxon>Mycolicibacterium</taxon>
    </lineage>
</organism>
<dbReference type="EC" id="1.2.1.41" evidence="1"/>
<dbReference type="EMBL" id="CP000480">
    <property type="protein sequence ID" value="ABK73874.1"/>
    <property type="molecule type" value="Genomic_DNA"/>
</dbReference>
<dbReference type="EMBL" id="CP001663">
    <property type="protein sequence ID" value="AFP40926.1"/>
    <property type="molecule type" value="Genomic_DNA"/>
</dbReference>
<dbReference type="RefSeq" id="WP_011729942.1">
    <property type="nucleotide sequence ID" value="NZ_SIJM01000004.1"/>
</dbReference>
<dbReference type="RefSeq" id="YP_888853.1">
    <property type="nucleotide sequence ID" value="NC_008596.1"/>
</dbReference>
<dbReference type="SMR" id="A0R115"/>
<dbReference type="STRING" id="246196.MSMEG_4584"/>
<dbReference type="PaxDb" id="246196-MSMEI_4472"/>
<dbReference type="KEGG" id="msb:LJ00_22685"/>
<dbReference type="KEGG" id="msg:MSMEI_4472"/>
<dbReference type="KEGG" id="msm:MSMEG_4584"/>
<dbReference type="PATRIC" id="fig|246196.19.peg.4487"/>
<dbReference type="eggNOG" id="COG0014">
    <property type="taxonomic scope" value="Bacteria"/>
</dbReference>
<dbReference type="OrthoDB" id="9809970at2"/>
<dbReference type="UniPathway" id="UPA00098">
    <property type="reaction ID" value="UER00360"/>
</dbReference>
<dbReference type="Proteomes" id="UP000000757">
    <property type="component" value="Chromosome"/>
</dbReference>
<dbReference type="Proteomes" id="UP000006158">
    <property type="component" value="Chromosome"/>
</dbReference>
<dbReference type="GO" id="GO:0005737">
    <property type="term" value="C:cytoplasm"/>
    <property type="evidence" value="ECO:0007669"/>
    <property type="project" value="UniProtKB-SubCell"/>
</dbReference>
<dbReference type="GO" id="GO:0004350">
    <property type="term" value="F:glutamate-5-semialdehyde dehydrogenase activity"/>
    <property type="evidence" value="ECO:0007669"/>
    <property type="project" value="UniProtKB-UniRule"/>
</dbReference>
<dbReference type="GO" id="GO:0050661">
    <property type="term" value="F:NADP binding"/>
    <property type="evidence" value="ECO:0007669"/>
    <property type="project" value="InterPro"/>
</dbReference>
<dbReference type="GO" id="GO:0055129">
    <property type="term" value="P:L-proline biosynthetic process"/>
    <property type="evidence" value="ECO:0007669"/>
    <property type="project" value="UniProtKB-UniRule"/>
</dbReference>
<dbReference type="CDD" id="cd07079">
    <property type="entry name" value="ALDH_F18-19_ProA-GPR"/>
    <property type="match status" value="1"/>
</dbReference>
<dbReference type="FunFam" id="3.40.309.10:FF:000006">
    <property type="entry name" value="Gamma-glutamyl phosphate reductase"/>
    <property type="match status" value="1"/>
</dbReference>
<dbReference type="Gene3D" id="3.40.605.10">
    <property type="entry name" value="Aldehyde Dehydrogenase, Chain A, domain 1"/>
    <property type="match status" value="1"/>
</dbReference>
<dbReference type="Gene3D" id="3.40.309.10">
    <property type="entry name" value="Aldehyde Dehydrogenase, Chain A, domain 2"/>
    <property type="match status" value="1"/>
</dbReference>
<dbReference type="HAMAP" id="MF_00412">
    <property type="entry name" value="ProA"/>
    <property type="match status" value="1"/>
</dbReference>
<dbReference type="InterPro" id="IPR016161">
    <property type="entry name" value="Ald_DH/histidinol_DH"/>
</dbReference>
<dbReference type="InterPro" id="IPR016163">
    <property type="entry name" value="Ald_DH_C"/>
</dbReference>
<dbReference type="InterPro" id="IPR016162">
    <property type="entry name" value="Ald_DH_N"/>
</dbReference>
<dbReference type="InterPro" id="IPR015590">
    <property type="entry name" value="Aldehyde_DH_dom"/>
</dbReference>
<dbReference type="InterPro" id="IPR020593">
    <property type="entry name" value="G-glutamylP_reductase_CS"/>
</dbReference>
<dbReference type="InterPro" id="IPR012134">
    <property type="entry name" value="Glu-5-SA_DH"/>
</dbReference>
<dbReference type="InterPro" id="IPR000965">
    <property type="entry name" value="GPR_dom"/>
</dbReference>
<dbReference type="NCBIfam" id="NF001221">
    <property type="entry name" value="PRK00197.1"/>
    <property type="match status" value="1"/>
</dbReference>
<dbReference type="NCBIfam" id="TIGR00407">
    <property type="entry name" value="proA"/>
    <property type="match status" value="1"/>
</dbReference>
<dbReference type="PANTHER" id="PTHR11063:SF8">
    <property type="entry name" value="DELTA-1-PYRROLINE-5-CARBOXYLATE SYNTHASE"/>
    <property type="match status" value="1"/>
</dbReference>
<dbReference type="PANTHER" id="PTHR11063">
    <property type="entry name" value="GLUTAMATE SEMIALDEHYDE DEHYDROGENASE"/>
    <property type="match status" value="1"/>
</dbReference>
<dbReference type="Pfam" id="PF00171">
    <property type="entry name" value="Aldedh"/>
    <property type="match status" value="2"/>
</dbReference>
<dbReference type="PIRSF" id="PIRSF000151">
    <property type="entry name" value="GPR"/>
    <property type="match status" value="1"/>
</dbReference>
<dbReference type="SUPFAM" id="SSF53720">
    <property type="entry name" value="ALDH-like"/>
    <property type="match status" value="1"/>
</dbReference>
<dbReference type="PROSITE" id="PS01223">
    <property type="entry name" value="PROA"/>
    <property type="match status" value="1"/>
</dbReference>
<keyword id="KW-0028">Amino-acid biosynthesis</keyword>
<keyword id="KW-0963">Cytoplasm</keyword>
<keyword id="KW-0521">NADP</keyword>
<keyword id="KW-0560">Oxidoreductase</keyword>
<keyword id="KW-0641">Proline biosynthesis</keyword>
<keyword id="KW-1185">Reference proteome</keyword>